<feature type="chain" id="PRO_0000065787" description="Uncharacterized protein ORF1">
    <location>
        <begin position="1"/>
        <end position="715"/>
    </location>
</feature>
<feature type="transmembrane region" description="Helical" evidence="1">
    <location>
        <begin position="688"/>
        <end position="708"/>
    </location>
</feature>
<name>ORF1_SPV1R</name>
<reference key="1">
    <citation type="journal article" date="1990" name="Nucleic Acids Res.">
        <title>Complete nucleotide sequence of the genome of Spiroplasma citri virus SpV1-R8A2 B.</title>
        <authorList>
            <person name="Renaudin J."/>
            <person name="Aullo P."/>
            <person name="Vignault J.C."/>
            <person name="Bove J.M."/>
        </authorList>
    </citation>
    <scope>NUCLEOTIDE SEQUENCE [GENOMIC DNA]</scope>
</reference>
<comment type="subcellular location">
    <subcellularLocation>
        <location evidence="2">Host membrane</location>
        <topology evidence="2">Single-pass membrane protein</topology>
    </subcellularLocation>
</comment>
<comment type="similarity">
    <text evidence="2">Belongs to the plectrovirus ORF1 family.</text>
</comment>
<organism>
    <name type="scientific">Spiroplasma virus SpV1-R8A2 B</name>
    <name type="common">SpV1</name>
    <name type="synonym">Spiroplasma virus 1</name>
    <dbReference type="NCBI Taxonomy" id="10854"/>
    <lineage>
        <taxon>Viruses</taxon>
        <taxon>Monodnaviria</taxon>
        <taxon>Loebvirae</taxon>
        <taxon>Hofneiviricota</taxon>
        <taxon>Faserviricetes</taxon>
        <taxon>Tubulavirales</taxon>
        <taxon>Plectroviridae</taxon>
        <taxon>Vespertiliovirus</taxon>
        <taxon>Vespertiliovirus R8A2B</taxon>
    </lineage>
</organism>
<dbReference type="EMBL" id="X51344">
    <property type="protein sequence ID" value="CAA35728.1"/>
    <property type="molecule type" value="Genomic_DNA"/>
</dbReference>
<dbReference type="RefSeq" id="NP_040340.1">
    <property type="nucleotide sequence ID" value="NC_001365.1"/>
</dbReference>
<dbReference type="KEGG" id="vg:1260861"/>
<dbReference type="OrthoDB" id="1060at10239"/>
<dbReference type="Proteomes" id="UP000001252">
    <property type="component" value="Segment"/>
</dbReference>
<dbReference type="GO" id="GO:0033644">
    <property type="term" value="C:host cell membrane"/>
    <property type="evidence" value="ECO:0007669"/>
    <property type="project" value="UniProtKB-SubCell"/>
</dbReference>
<dbReference type="GO" id="GO:0016020">
    <property type="term" value="C:membrane"/>
    <property type="evidence" value="ECO:0007669"/>
    <property type="project" value="UniProtKB-KW"/>
</dbReference>
<dbReference type="InterPro" id="IPR022160">
    <property type="entry name" value="Phage_1-C74_Orf1"/>
</dbReference>
<dbReference type="Pfam" id="PF12461">
    <property type="entry name" value="DUF3688"/>
    <property type="match status" value="1"/>
</dbReference>
<gene>
    <name type="ORF">ORF1</name>
</gene>
<keyword id="KW-1043">Host membrane</keyword>
<keyword id="KW-0472">Membrane</keyword>
<keyword id="KW-1185">Reference proteome</keyword>
<keyword id="KW-0812">Transmembrane</keyword>
<keyword id="KW-1133">Transmembrane helix</keyword>
<protein>
    <recommendedName>
        <fullName>Uncharacterized protein ORF1</fullName>
    </recommendedName>
    <alternativeName>
        <fullName>Gene 1 protein</fullName>
    </alternativeName>
</protein>
<accession>P15892</accession>
<evidence type="ECO:0000255" key="1"/>
<evidence type="ECO:0000305" key="2"/>
<organismHost>
    <name type="scientific">Spiroplasma citri</name>
    <dbReference type="NCBI Taxonomy" id="2133"/>
</organismHost>
<sequence length="715" mass="85293">MKKSLSLFAIFILTFLGLVIPFITLTAFRPLNEEQYTLKQESSTGKGINETDFINTMFLRSSFFENWSETNYFINPTLKTSKNLLFNDKWYLDFLQDSYSTGVVYDKPGEIFLNYYRQWHSLKNKYMVEKFYDVKKENFLNDLTDFIYAFAVKYKMFDVSKEIVENVDRYKENHYPRVKLKQDNWKLITDYNWLKDNFDNKYYFVIWKQSYSKEWEIMKFKHNMRYDMKIESYIKNNSFKGLYRWDGDGEPQTPTIDKNTGEITDWNSYQQSRVKQFIDLSLYSVLQENIRVQQGGSADYENPNKVGTKRIIFDFETVDELDVKNIKKAIYRMILTVDEANLIISGSLELNNINNDDLSFNFSFMRTGMGEVFNFNGSIYSSLNSKDLKYYQQFSGQFDLSKFLQSFFASALVPVFQNRSLFIENGYIDNLQYDTVLVNFFALKLQNFNNILLIENINDKLQFDKLLNSMFKISQKFYTNYLRTIFDLENNTYVQGYNKKYGLLVNNGFKIYPRYFYFSDKYKQLDIKLYSAFKNRFYTINNYGSVFNYDFSVANNYNIKLNSGYVFGGDLQNKYGLQYKKIEEQKIGYNVFELQAQKENDMYRYYDFNFGIYNWQEINNGGLFPDKQWWQVQYVTPKGWWDFGAHIKNAVIWIVNTIPGVKQVNELASGVGKVFETVYSFFSQIFEVWKFNPALYSTITNIFLLIIFMKFVRLI</sequence>
<proteinExistence type="inferred from homology"/>